<dbReference type="EMBL" id="AY144961">
    <property type="protein sequence ID" value="AAO32524.1"/>
    <property type="molecule type" value="Genomic_DNA"/>
</dbReference>
<dbReference type="EMBL" id="HE576758">
    <property type="protein sequence ID" value="CCC71199.1"/>
    <property type="molecule type" value="Genomic_DNA"/>
</dbReference>
<dbReference type="SMR" id="Q875V8"/>
<dbReference type="FunCoup" id="Q875V8">
    <property type="interactions" value="873"/>
</dbReference>
<dbReference type="STRING" id="1064592.Q875V8"/>
<dbReference type="KEGG" id="ncs:NCAS_0G03120"/>
<dbReference type="eggNOG" id="KOG1985">
    <property type="taxonomic scope" value="Eukaryota"/>
</dbReference>
<dbReference type="HOGENOM" id="CLU_004589_2_1_1"/>
<dbReference type="InParanoid" id="Q875V8"/>
<dbReference type="OMA" id="AVECSKQ"/>
<dbReference type="OrthoDB" id="49016at2759"/>
<dbReference type="Proteomes" id="UP000001640">
    <property type="component" value="Chromosome 7"/>
</dbReference>
<dbReference type="GO" id="GO:0030127">
    <property type="term" value="C:COPII vesicle coat"/>
    <property type="evidence" value="ECO:0007669"/>
    <property type="project" value="EnsemblFungi"/>
</dbReference>
<dbReference type="GO" id="GO:0070971">
    <property type="term" value="C:endoplasmic reticulum exit site"/>
    <property type="evidence" value="ECO:0007669"/>
    <property type="project" value="TreeGrafter"/>
</dbReference>
<dbReference type="GO" id="GO:0005789">
    <property type="term" value="C:endoplasmic reticulum membrane"/>
    <property type="evidence" value="ECO:0007669"/>
    <property type="project" value="UniProtKB-SubCell"/>
</dbReference>
<dbReference type="GO" id="GO:0000139">
    <property type="term" value="C:Golgi membrane"/>
    <property type="evidence" value="ECO:0007669"/>
    <property type="project" value="UniProtKB-SubCell"/>
</dbReference>
<dbReference type="GO" id="GO:0005048">
    <property type="term" value="F:signal sequence binding"/>
    <property type="evidence" value="ECO:0007669"/>
    <property type="project" value="EnsemblFungi"/>
</dbReference>
<dbReference type="GO" id="GO:0000149">
    <property type="term" value="F:SNARE binding"/>
    <property type="evidence" value="ECO:0007669"/>
    <property type="project" value="TreeGrafter"/>
</dbReference>
<dbReference type="GO" id="GO:0008270">
    <property type="term" value="F:zinc ion binding"/>
    <property type="evidence" value="ECO:0007669"/>
    <property type="project" value="InterPro"/>
</dbReference>
<dbReference type="GO" id="GO:0090110">
    <property type="term" value="P:COPII-coated vesicle cargo loading"/>
    <property type="evidence" value="ECO:0007669"/>
    <property type="project" value="EnsemblFungi"/>
</dbReference>
<dbReference type="GO" id="GO:0006886">
    <property type="term" value="P:intracellular protein transport"/>
    <property type="evidence" value="ECO:0007669"/>
    <property type="project" value="InterPro"/>
</dbReference>
<dbReference type="GO" id="GO:0016236">
    <property type="term" value="P:macroautophagy"/>
    <property type="evidence" value="ECO:0007669"/>
    <property type="project" value="EnsemblFungi"/>
</dbReference>
<dbReference type="GO" id="GO:1902953">
    <property type="term" value="P:positive regulation of ER to Golgi vesicle-mediated transport"/>
    <property type="evidence" value="ECO:0007669"/>
    <property type="project" value="EnsemblFungi"/>
</dbReference>
<dbReference type="GO" id="GO:0070863">
    <property type="term" value="P:positive regulation of protein exit from endoplasmic reticulum"/>
    <property type="evidence" value="ECO:0007669"/>
    <property type="project" value="EnsemblFungi"/>
</dbReference>
<dbReference type="CDD" id="cd01479">
    <property type="entry name" value="Sec24-like"/>
    <property type="match status" value="1"/>
</dbReference>
<dbReference type="FunFam" id="3.40.20.10:FF:000049">
    <property type="entry name" value="Vesicle coat component"/>
    <property type="match status" value="1"/>
</dbReference>
<dbReference type="FunFam" id="3.40.50.410:FF:000081">
    <property type="entry name" value="Vesicle coat component"/>
    <property type="match status" value="1"/>
</dbReference>
<dbReference type="Gene3D" id="2.60.40.1670">
    <property type="entry name" value="beta-sandwich domain of Sec23/24"/>
    <property type="match status" value="1"/>
</dbReference>
<dbReference type="Gene3D" id="1.20.120.730">
    <property type="entry name" value="Sec23/Sec24 helical domain"/>
    <property type="match status" value="1"/>
</dbReference>
<dbReference type="Gene3D" id="3.40.20.10">
    <property type="entry name" value="Severin"/>
    <property type="match status" value="1"/>
</dbReference>
<dbReference type="Gene3D" id="3.40.50.410">
    <property type="entry name" value="von Willebrand factor, type A domain"/>
    <property type="match status" value="1"/>
</dbReference>
<dbReference type="Gene3D" id="2.30.30.380">
    <property type="entry name" value="Zn-finger domain of Sec23/24"/>
    <property type="match status" value="1"/>
</dbReference>
<dbReference type="InterPro" id="IPR029006">
    <property type="entry name" value="ADF-H/Gelsolin-like_dom_sf"/>
</dbReference>
<dbReference type="InterPro" id="IPR007123">
    <property type="entry name" value="Gelsolin-like_dom"/>
</dbReference>
<dbReference type="InterPro" id="IPR036180">
    <property type="entry name" value="Gelsolin-like_dom_sf"/>
</dbReference>
<dbReference type="InterPro" id="IPR006900">
    <property type="entry name" value="Sec23/24_helical_dom"/>
</dbReference>
<dbReference type="InterPro" id="IPR036175">
    <property type="entry name" value="Sec23/24_helical_dom_sf"/>
</dbReference>
<dbReference type="InterPro" id="IPR006896">
    <property type="entry name" value="Sec23/24_trunk_dom"/>
</dbReference>
<dbReference type="InterPro" id="IPR012990">
    <property type="entry name" value="Sec23_24_beta_S"/>
</dbReference>
<dbReference type="InterPro" id="IPR050550">
    <property type="entry name" value="SEC23_SEC24_subfamily"/>
</dbReference>
<dbReference type="InterPro" id="IPR041742">
    <property type="entry name" value="Sec24-like_trunk_dom"/>
</dbReference>
<dbReference type="InterPro" id="IPR036465">
    <property type="entry name" value="vWFA_dom_sf"/>
</dbReference>
<dbReference type="InterPro" id="IPR006895">
    <property type="entry name" value="Znf_Sec23_Sec24"/>
</dbReference>
<dbReference type="InterPro" id="IPR036174">
    <property type="entry name" value="Znf_Sec23_Sec24_sf"/>
</dbReference>
<dbReference type="PANTHER" id="PTHR13803">
    <property type="entry name" value="SEC24-RELATED PROTEIN"/>
    <property type="match status" value="1"/>
</dbReference>
<dbReference type="PANTHER" id="PTHR13803:SF39">
    <property type="entry name" value="SECRETORY 24AB, ISOFORM A"/>
    <property type="match status" value="1"/>
</dbReference>
<dbReference type="Pfam" id="PF00626">
    <property type="entry name" value="Gelsolin"/>
    <property type="match status" value="1"/>
</dbReference>
<dbReference type="Pfam" id="PF08033">
    <property type="entry name" value="Sec23_BS"/>
    <property type="match status" value="1"/>
</dbReference>
<dbReference type="Pfam" id="PF04815">
    <property type="entry name" value="Sec23_helical"/>
    <property type="match status" value="1"/>
</dbReference>
<dbReference type="Pfam" id="PF04811">
    <property type="entry name" value="Sec23_trunk"/>
    <property type="match status" value="1"/>
</dbReference>
<dbReference type="Pfam" id="PF04810">
    <property type="entry name" value="zf-Sec23_Sec24"/>
    <property type="match status" value="1"/>
</dbReference>
<dbReference type="SUPFAM" id="SSF81995">
    <property type="entry name" value="beta-sandwich domain of Sec23/24"/>
    <property type="match status" value="1"/>
</dbReference>
<dbReference type="SUPFAM" id="SSF82754">
    <property type="entry name" value="C-terminal, gelsolin-like domain of Sec23/24"/>
    <property type="match status" value="1"/>
</dbReference>
<dbReference type="SUPFAM" id="SSF81811">
    <property type="entry name" value="Helical domain of Sec23/24"/>
    <property type="match status" value="1"/>
</dbReference>
<dbReference type="SUPFAM" id="SSF53300">
    <property type="entry name" value="vWA-like"/>
    <property type="match status" value="1"/>
</dbReference>
<dbReference type="SUPFAM" id="SSF82919">
    <property type="entry name" value="Zn-finger domain of Sec23/24"/>
    <property type="match status" value="1"/>
</dbReference>
<proteinExistence type="inferred from homology"/>
<gene>
    <name type="primary">SEC241</name>
    <name type="ordered locus">NCAS_0G03120</name>
</gene>
<name>SC241_NAUCA</name>
<reference key="1">
    <citation type="journal article" date="2003" name="Nature">
        <title>Yeast genome duplication was followed by asynchronous differentiation of duplicated genes.</title>
        <authorList>
            <person name="Langkjaer R.B."/>
            <person name="Cliften P.F."/>
            <person name="Johnston M."/>
            <person name="Piskur J."/>
        </authorList>
    </citation>
    <scope>NUCLEOTIDE SEQUENCE [GENOMIC DNA]</scope>
    <source>
        <strain>ATCC 76901 / BCRC 22586 / CBS 4309 / NBRC 1992 / NRRL Y-12630</strain>
    </source>
</reference>
<reference key="2">
    <citation type="submission" date="2011-07" db="EMBL/GenBank/DDBJ databases">
        <title>Genome sequence of Naumovozyma castellii.</title>
        <authorList>
            <person name="Gordon J.L."/>
            <person name="Armisen D."/>
            <person name="Proux-Wera E."/>
            <person name="OhEigeartaigh S.S."/>
            <person name="Byrne K.P."/>
            <person name="Wolfe K.H."/>
        </authorList>
    </citation>
    <scope>NUCLEOTIDE SEQUENCE [LARGE SCALE GENOMIC DNA]</scope>
    <source>
        <strain>ATCC 76901 / BCRC 22586 / CBS 4309 / NBRC 1992 / NRRL Y-12630</strain>
    </source>
</reference>
<feature type="chain" id="PRO_0000295500" description="Protein transport protein SEC24-1">
    <location>
        <begin position="1"/>
        <end position="911"/>
    </location>
</feature>
<feature type="region of interest" description="Disordered" evidence="2">
    <location>
        <begin position="108"/>
        <end position="130"/>
    </location>
</feature>
<feature type="region of interest" description="Zinc finger-like">
    <location>
        <begin position="226"/>
        <end position="251"/>
    </location>
</feature>
<feature type="compositionally biased region" description="Low complexity" evidence="2">
    <location>
        <begin position="108"/>
        <end position="123"/>
    </location>
</feature>
<feature type="binding site" evidence="1">
    <location>
        <position position="226"/>
    </location>
    <ligand>
        <name>Zn(2+)</name>
        <dbReference type="ChEBI" id="CHEBI:29105"/>
    </ligand>
</feature>
<feature type="binding site" evidence="1">
    <location>
        <position position="229"/>
    </location>
    <ligand>
        <name>Zn(2+)</name>
        <dbReference type="ChEBI" id="CHEBI:29105"/>
    </ligand>
</feature>
<feature type="binding site" evidence="1">
    <location>
        <position position="248"/>
    </location>
    <ligand>
        <name>Zn(2+)</name>
        <dbReference type="ChEBI" id="CHEBI:29105"/>
    </ligand>
</feature>
<feature type="binding site" evidence="1">
    <location>
        <position position="251"/>
    </location>
    <ligand>
        <name>Zn(2+)</name>
        <dbReference type="ChEBI" id="CHEBI:29105"/>
    </ligand>
</feature>
<comment type="function">
    <text evidence="1">Component of the coat protein complex II (COPII) which promotes the formation of transport vesicles from the endoplasmic reticulum (ER). The coat has two main functions, the physical deformation of the endoplasmic reticulum membrane into vesicles and the selection of cargo molecules (By similarity).</text>
</comment>
<comment type="subunit">
    <text evidence="1">The COPII coat is composed of at least 5 proteins: the SEC23/24 complex, the SEC13/31 complex, and the protein SAR1. Golgi apparatus membrane; Peripheral membrane protein; Cytoplasmic side.</text>
</comment>
<comment type="subcellular location">
    <subcellularLocation>
        <location evidence="1">Cytoplasm</location>
    </subcellularLocation>
    <subcellularLocation>
        <location evidence="1">Cytoplasmic vesicle</location>
        <location evidence="1">COPII-coated vesicle membrane</location>
        <topology evidence="1">Peripheral membrane protein</topology>
        <orientation evidence="1">Cytoplasmic side</orientation>
    </subcellularLocation>
    <subcellularLocation>
        <location evidence="1">Endoplasmic reticulum membrane</location>
        <topology evidence="1">Peripheral membrane protein</topology>
        <orientation evidence="1">Cytoplasmic side</orientation>
    </subcellularLocation>
    <subcellularLocation>
        <location evidence="1">Golgi apparatus membrane</location>
        <topology evidence="1">Peripheral membrane protein</topology>
        <orientation evidence="1">Cytoplasmic side</orientation>
    </subcellularLocation>
</comment>
<comment type="similarity">
    <text evidence="3">Belongs to the SEC23/SEC24 family. SEC24 subfamily.</text>
</comment>
<organism>
    <name type="scientific">Naumovozyma castellii</name>
    <name type="common">Yeast</name>
    <name type="synonym">Saccharomyces castellii</name>
    <dbReference type="NCBI Taxonomy" id="27288"/>
    <lineage>
        <taxon>Eukaryota</taxon>
        <taxon>Fungi</taxon>
        <taxon>Dikarya</taxon>
        <taxon>Ascomycota</taxon>
        <taxon>Saccharomycotina</taxon>
        <taxon>Saccharomycetes</taxon>
        <taxon>Saccharomycetales</taxon>
        <taxon>Saccharomycetaceae</taxon>
        <taxon>Naumovozyma</taxon>
    </lineage>
</organism>
<keyword id="KW-0963">Cytoplasm</keyword>
<keyword id="KW-0968">Cytoplasmic vesicle</keyword>
<keyword id="KW-0256">Endoplasmic reticulum</keyword>
<keyword id="KW-0931">ER-Golgi transport</keyword>
<keyword id="KW-0333">Golgi apparatus</keyword>
<keyword id="KW-0472">Membrane</keyword>
<keyword id="KW-0479">Metal-binding</keyword>
<keyword id="KW-0653">Protein transport</keyword>
<keyword id="KW-1185">Reference proteome</keyword>
<keyword id="KW-0813">Transport</keyword>
<keyword id="KW-0862">Zinc</keyword>
<evidence type="ECO:0000250" key="1"/>
<evidence type="ECO:0000256" key="2">
    <source>
        <dbReference type="SAM" id="MobiDB-lite"/>
    </source>
</evidence>
<evidence type="ECO:0000305" key="3"/>
<protein>
    <recommendedName>
        <fullName>Protein transport protein SEC24-1</fullName>
    </recommendedName>
</protein>
<sequence length="911" mass="102400">MSHKKRVYPTAQLQYGQTNIYEQHGVPQDAGAPQGQPLQSDIPYMNAQPGVIPGQGAPMMMDNGAMPQQQMFTPAQQQLNQQIDQTTAAMGNMQFNPAANESNMYYQQPLPQQQQQQQQQQGPAKPPKPMNQLYPIDLLVAFPPPISDLSLPPPPILFPLDTIPVPSEDALAPSNYIRSTLNAVPKSNSLLKKTKLPFSLVITPYQHLHDDINPPPLNEDGTIVRCRRCRSYMNPFVHFNQDGRRWKCNICNLFNEVPSFLDRMPNDTMSNRYMRNELRYSVVEYLAPKEYSLRQPPPSTYTFIIDVSQNAMKNGLLGTTTRTLLDNLDSLPNHDGRTRISILCVDNGLHYFAIPSDDQEGQQVEMMDVCDLDDAFIPRPDSMVVNLVQCRNNIETLLTKIPQIFQNNIINKFALGPALQAAYNLTRNEGGKIIVVSATLPNIGVGQLKKRVEEANVGTPKESQQLLTCQDPFYKTFTIQCNKVQISIDMFLASEEYMDVATLANLGHFSGGQTHFYPGFSAQRITDATKFSMEFAKHLSMDTSNEVVMRARGSTGIRTTGFHGHFFNRSSDLCAFSIMNRDQSYVFDITLDENIAAEYCYVQVAILLSLNTSQRRIRVITLALPTTDSIAEVYASVDQLAVTAAFTQKAIDKAQDTSLEEARRFINQSVEDVLTTYKKELVVQNTGAGGMPLRLCANMKIFPLLMHALTKNLAFRPGRVPSDHRAAALNYMESVPLKYLLKCIYPTIYSLHDMPDEVGLPDENNEIILPEPINASYSSFETYGLYLIDNGIDLFLWMGGEALPQLVEDAFGVPNILEMPIGKQEVPVVPESPFNERIRNIINRLRNHDDVITYQSLYILRSASNSDPVQANAKELSSLRMWASTHLVEDKIMGSEGYRDFLQMMKNKTSK</sequence>
<accession>Q875V8</accession>
<accession>G0VIG4</accession>